<feature type="chain" id="PRO_0000280244" description="Ankyrin repeat and LEM domain-containing protein 2">
    <location>
        <begin position="1"/>
        <end position="964"/>
    </location>
</feature>
<feature type="topological domain" description="Extracellular" evidence="3">
    <location>
        <begin position="1"/>
        <end position="7"/>
    </location>
</feature>
<feature type="transmembrane region" description="Helical; Signal-anchor for type III membrane protein" evidence="3">
    <location>
        <begin position="8"/>
        <end position="28"/>
    </location>
</feature>
<feature type="topological domain" description="Cytoplasmic" evidence="3">
    <location>
        <begin position="29"/>
        <end position="964"/>
    </location>
</feature>
<feature type="domain" description="LEM" evidence="4">
    <location>
        <begin position="72"/>
        <end position="116"/>
    </location>
</feature>
<feature type="repeat" description="ANK">
    <location>
        <begin position="420"/>
        <end position="449"/>
    </location>
</feature>
<feature type="region of interest" description="Disordered" evidence="5">
    <location>
        <begin position="667"/>
        <end position="705"/>
    </location>
</feature>
<feature type="region of interest" description="Disordered" evidence="5">
    <location>
        <begin position="919"/>
        <end position="947"/>
    </location>
</feature>
<feature type="compositionally biased region" description="Polar residues" evidence="5">
    <location>
        <begin position="667"/>
        <end position="693"/>
    </location>
</feature>
<feature type="compositionally biased region" description="Low complexity" evidence="5">
    <location>
        <begin position="919"/>
        <end position="930"/>
    </location>
</feature>
<feature type="modified residue" description="Phosphoserine" evidence="2">
    <location>
        <position position="267"/>
    </location>
</feature>
<feature type="modified residue" description="Phosphoserine" evidence="2">
    <location>
        <position position="276"/>
    </location>
</feature>
<feature type="modified residue" description="Phosphoserine" evidence="2">
    <location>
        <position position="504"/>
    </location>
</feature>
<feature type="modified residue" description="Phosphoserine" evidence="2">
    <location>
        <position position="520"/>
    </location>
</feature>
<feature type="modified residue" description="Phosphoserine" evidence="2">
    <location>
        <position position="536"/>
    </location>
</feature>
<feature type="modified residue" description="Phosphoserine" evidence="2">
    <location>
        <position position="676"/>
    </location>
</feature>
<feature type="modified residue" description="Phosphoserine" evidence="2">
    <location>
        <position position="916"/>
    </location>
</feature>
<feature type="modified residue" description="Phosphoserine" evidence="2">
    <location>
        <position position="940"/>
    </location>
</feature>
<feature type="splice variant" id="VSP_044174" description="In isoform 2." evidence="6">
    <original>SWPSPALKGKFTTELVDLDCCHSCSGRSSPAGSSPSKPGHTTFSSGLHSPGRYSPAHGRHFQRVACMARLAAL</original>
    <variation>RGGYNVENKCLQLYGRNQQEMLLNSPSSLLLEEMVKGFVF</variation>
    <location>
        <begin position="892"/>
        <end position="964"/>
    </location>
</feature>
<proteinExistence type="evidence at transcript level"/>
<comment type="function">
    <text evidence="2">Involved in mitotic nuclear envelope reassembly by promoting dephosphorylation of BAF/BANF1 during mitotic exit. Coordinates the control of BAF/BANF1 dephosphorylation by inhibiting VRK1 kinase and promoting dephosphorylation of BAF/BANF1 by protein phosphatase 2A (PP2A), thereby facilitating nuclear envelope assembly. May regulate nuclear localization of VRK1 in non-dividing cells. It is unclear whether it acts as a real PP2A regulatory subunit or whether it is involved in recruitment of the PP2A complex. Involved in brain development.</text>
</comment>
<comment type="subunit">
    <text evidence="1">Interacts with BAF/BANF1. Interacts with protein phosphatase 2A (PP2A) components PPP2C (PPP2CA or PPP2CB) and PPP2R1A (By similarity).</text>
</comment>
<comment type="subcellular location">
    <subcellularLocation>
        <location evidence="1">Endoplasmic reticulum membrane</location>
        <topology evidence="1">Single-pass type III membrane protein</topology>
    </subcellularLocation>
</comment>
<comment type="alternative products">
    <event type="alternative splicing"/>
    <isoform>
        <id>Q7TP65-1</id>
        <name>1</name>
        <sequence type="displayed"/>
    </isoform>
    <isoform>
        <id>Q7TP65-2</id>
        <name>2</name>
        <sequence type="described" ref="VSP_044174"/>
    </isoform>
</comment>
<comment type="similarity">
    <text evidence="7">Belongs to the ANKLE2 family.</text>
</comment>
<sequence>MLWQRLAVVEWAALAWELLGASVLLIAVRWLVRRLENLSRDPNRCGTLSSLPGASAAVSAQPGEVMTMDAMLARLKLLNPDDLRQEVMKAGLKCGPITSTTRFIFEKKLAQALLEQGGLLTSSLPKHSEVTGTAFIHGTSRTPAFVDRKQTQQACLSEDRDFGYSVGLNPPEEEAVTSSVHPIPFSASTRNDNHKAGVTTAKEPLLYYGVCPVYEDGLVRHERIHVYEDKKEALQAVKLIKGSRFKAFPTREDAEKFARGICDYLPSPSKNMSLLSPVKAMPLCSNDGPKADGLCLAESETVNKERANSYKNPRTQDLTAKLRKAVERGEEHTFSDLIWSNPRYLIGSGDNPTIVQEGCRYNVMHVAAKENQASVCQLTLETLENPEFMRLMYPDDNMDMLQKRILYIVDLYLNTPDKVGFDTPLHFACKFGNVDVVNVLSSHPLIVKNPRNKYGKTPEDVICERSKNKSVELRERIREYLMGHYYVPLLRAEDTSPVIGELWSSDQKAEASSADHCRSSPRDPVMTLRAFVGPLSPSKAEDFRKLWKTPPRKKAGLFHSIRKSDPERGIERVGRELAHELGYPWVEYWEFLGCFVDLSSQEGLQRLEEYLIQKELNQKAQHEIGEEEGCLQDRTSDFGSGKKYSNSISVGAFLDGGDDISLEEVKNQQNTVPSQSQPSVDKFQNSKSGSPSLGQKADPGEAAVGFYPDNSRNGFCYPLNSRTADGRETEATNGEEALPPPVSILTQEFDKLNLQSLGDNLFETPNKNRELEDKILASSKGVVESGLASPAAIARLENKQVRTNSEVSEAMAEMSLGPNSPQLGVQAGLEPGFSSATADPTKRLFLSGEEPSKLDRDVLAALECAIIDPGLYPAVHRWKSTVMGYSPSDRQSWPSPALKGKFTTELVDLDCCHSCSGRSSPAGSSPSKPGHTTFSSGLHSPGRYSPAHGRHFQRVACMARLAAL</sequence>
<name>ANKL2_RAT</name>
<dbReference type="EMBL" id="AY325182">
    <property type="protein sequence ID" value="AAP92583.1"/>
    <property type="molecule type" value="mRNA"/>
</dbReference>
<dbReference type="RefSeq" id="NP_001041366.1">
    <property type="nucleotide sequence ID" value="NM_001047901.1"/>
</dbReference>
<dbReference type="SMR" id="Q7TP65"/>
<dbReference type="FunCoup" id="Q7TP65">
    <property type="interactions" value="4958"/>
</dbReference>
<dbReference type="IntAct" id="Q7TP65">
    <property type="interactions" value="3"/>
</dbReference>
<dbReference type="STRING" id="10116.ENSRNOP00000070240"/>
<dbReference type="PhosphoSitePlus" id="Q7TP65"/>
<dbReference type="PaxDb" id="10116-ENSRNOP00000053507"/>
<dbReference type="AGR" id="RGD:1310191"/>
<dbReference type="RGD" id="1310191">
    <property type="gene designation" value="Ankle2"/>
</dbReference>
<dbReference type="eggNOG" id="ENOG502QQ4Z">
    <property type="taxonomic scope" value="Eukaryota"/>
</dbReference>
<dbReference type="InParanoid" id="Q7TP65"/>
<dbReference type="OrthoDB" id="7446186at2759"/>
<dbReference type="Reactome" id="R-RNO-2995383">
    <property type="pathway name" value="Initiation of Nuclear Envelope (NE) Reformation"/>
</dbReference>
<dbReference type="Reactome" id="R-RNO-9013404">
    <property type="pathway name" value="RAC2 GTPase cycle"/>
</dbReference>
<dbReference type="Reactome" id="R-RNO-9013408">
    <property type="pathway name" value="RHOG GTPase cycle"/>
</dbReference>
<dbReference type="PRO" id="PR:Q7TP65"/>
<dbReference type="Proteomes" id="UP000002494">
    <property type="component" value="Unplaced"/>
</dbReference>
<dbReference type="GO" id="GO:0005783">
    <property type="term" value="C:endoplasmic reticulum"/>
    <property type="evidence" value="ECO:0000318"/>
    <property type="project" value="GO_Central"/>
</dbReference>
<dbReference type="GO" id="GO:0005789">
    <property type="term" value="C:endoplasmic reticulum membrane"/>
    <property type="evidence" value="ECO:0000250"/>
    <property type="project" value="UniProtKB"/>
</dbReference>
<dbReference type="GO" id="GO:0004860">
    <property type="term" value="F:protein kinase inhibitor activity"/>
    <property type="evidence" value="ECO:0000250"/>
    <property type="project" value="UniProtKB"/>
</dbReference>
<dbReference type="GO" id="GO:0051721">
    <property type="term" value="F:protein phosphatase 2A binding"/>
    <property type="evidence" value="ECO:0000250"/>
    <property type="project" value="UniProtKB"/>
</dbReference>
<dbReference type="GO" id="GO:0051301">
    <property type="term" value="P:cell division"/>
    <property type="evidence" value="ECO:0007669"/>
    <property type="project" value="UniProtKB-KW"/>
</dbReference>
<dbReference type="GO" id="GO:0007417">
    <property type="term" value="P:central nervous system development"/>
    <property type="evidence" value="ECO:0000250"/>
    <property type="project" value="UniProtKB"/>
</dbReference>
<dbReference type="GO" id="GO:0007084">
    <property type="term" value="P:mitotic nuclear membrane reassembly"/>
    <property type="evidence" value="ECO:0000250"/>
    <property type="project" value="UniProtKB"/>
</dbReference>
<dbReference type="GO" id="GO:0043066">
    <property type="term" value="P:negative regulation of apoptotic process"/>
    <property type="evidence" value="ECO:0000250"/>
    <property type="project" value="UniProtKB"/>
</dbReference>
<dbReference type="GO" id="GO:0042326">
    <property type="term" value="P:negative regulation of phosphorylation"/>
    <property type="evidence" value="ECO:0000250"/>
    <property type="project" value="UniProtKB"/>
</dbReference>
<dbReference type="CDD" id="cd12944">
    <property type="entry name" value="LEM_ANKL2"/>
    <property type="match status" value="1"/>
</dbReference>
<dbReference type="FunFam" id="1.25.40.20:FF:000072">
    <property type="entry name" value="Ankyrin repeat and LEM domain containing 2"/>
    <property type="match status" value="1"/>
</dbReference>
<dbReference type="FunFam" id="1.10.720.40:FF:000001">
    <property type="entry name" value="LEM domain containing 2, isoform CRA_a"/>
    <property type="match status" value="1"/>
</dbReference>
<dbReference type="Gene3D" id="1.10.720.40">
    <property type="match status" value="1"/>
</dbReference>
<dbReference type="Gene3D" id="1.25.40.20">
    <property type="entry name" value="Ankyrin repeat-containing domain"/>
    <property type="match status" value="1"/>
</dbReference>
<dbReference type="InterPro" id="IPR056237">
    <property type="entry name" value="ANKLE2_3rd"/>
</dbReference>
<dbReference type="InterPro" id="IPR002110">
    <property type="entry name" value="Ankyrin_rpt"/>
</dbReference>
<dbReference type="InterPro" id="IPR036770">
    <property type="entry name" value="Ankyrin_rpt-contain_sf"/>
</dbReference>
<dbReference type="InterPro" id="IPR011015">
    <property type="entry name" value="LEM/LEM-like_dom_sf"/>
</dbReference>
<dbReference type="InterPro" id="IPR035006">
    <property type="entry name" value="LEM_ANKL2"/>
</dbReference>
<dbReference type="InterPro" id="IPR003887">
    <property type="entry name" value="LEM_dom"/>
</dbReference>
<dbReference type="PANTHER" id="PTHR12349">
    <property type="entry name" value="ANKYRIN REPEAT AND LEM DOMAIN-CONTAINING PROTEIN 2"/>
    <property type="match status" value="1"/>
</dbReference>
<dbReference type="PANTHER" id="PTHR12349:SF4">
    <property type="entry name" value="ANKYRIN REPEAT AND LEM DOMAIN-CONTAINING PROTEIN 2"/>
    <property type="match status" value="1"/>
</dbReference>
<dbReference type="Pfam" id="PF00023">
    <property type="entry name" value="Ank"/>
    <property type="match status" value="1"/>
</dbReference>
<dbReference type="Pfam" id="PF24567">
    <property type="entry name" value="ANKLE2_3rd"/>
    <property type="match status" value="1"/>
</dbReference>
<dbReference type="Pfam" id="PF03020">
    <property type="entry name" value="LEM"/>
    <property type="match status" value="1"/>
</dbReference>
<dbReference type="SUPFAM" id="SSF48403">
    <property type="entry name" value="Ankyrin repeat"/>
    <property type="match status" value="1"/>
</dbReference>
<dbReference type="SUPFAM" id="SSF63451">
    <property type="entry name" value="LEM domain"/>
    <property type="match status" value="1"/>
</dbReference>
<dbReference type="PROSITE" id="PS50954">
    <property type="entry name" value="LEM"/>
    <property type="match status" value="1"/>
</dbReference>
<gene>
    <name type="primary">Ankle2</name>
    <name type="synonym">Lem4</name>
    <name type="ORF">Ab2-034</name>
</gene>
<keyword id="KW-0025">Alternative splicing</keyword>
<keyword id="KW-0040">ANK repeat</keyword>
<keyword id="KW-0131">Cell cycle</keyword>
<keyword id="KW-0132">Cell division</keyword>
<keyword id="KW-0256">Endoplasmic reticulum</keyword>
<keyword id="KW-0472">Membrane</keyword>
<keyword id="KW-0498">Mitosis</keyword>
<keyword id="KW-0597">Phosphoprotein</keyword>
<keyword id="KW-1185">Reference proteome</keyword>
<keyword id="KW-0735">Signal-anchor</keyword>
<keyword id="KW-0812">Transmembrane</keyword>
<keyword id="KW-1133">Transmembrane helix</keyword>
<protein>
    <recommendedName>
        <fullName>Ankyrin repeat and LEM domain-containing protein 2</fullName>
    </recommendedName>
    <alternativeName>
        <fullName>LEM domain-containing protein 4</fullName>
    </alternativeName>
    <alternativeName>
        <fullName>Liver regeneration-related protein LRRG057</fullName>
    </alternativeName>
</protein>
<accession>Q7TP65</accession>
<accession>F1LMJ0</accession>
<accession>F1M1M8</accession>
<reference key="1">
    <citation type="submission" date="2003-06" db="EMBL/GenBank/DDBJ databases">
        <title>Liver regeneration after PH.</title>
        <authorList>
            <person name="Xu C.S."/>
            <person name="Li W.Q."/>
            <person name="Li Y.C."/>
            <person name="Chai L.Q."/>
            <person name="Yuan J.Y."/>
            <person name="Yang K.J."/>
            <person name="Yan H.M."/>
            <person name="Chang C.F."/>
            <person name="Zhao L.F."/>
            <person name="Ma H."/>
            <person name="Wang L."/>
            <person name="Wang S.F."/>
            <person name="Han H.P."/>
            <person name="Wang G.P."/>
            <person name="Shi J.B."/>
            <person name="Rahman S."/>
            <person name="Wang Q.N."/>
            <person name="Zhang J.B."/>
        </authorList>
    </citation>
    <scope>NUCLEOTIDE SEQUENCE [LARGE SCALE MRNA] (ISOFORM 2)</scope>
    <source>
        <tissue>Liver</tissue>
    </source>
</reference>
<reference key="2">
    <citation type="journal article" date="2004" name="Nature">
        <title>Genome sequence of the Brown Norway rat yields insights into mammalian evolution.</title>
        <authorList>
            <person name="Gibbs R.A."/>
            <person name="Weinstock G.M."/>
            <person name="Metzker M.L."/>
            <person name="Muzny D.M."/>
            <person name="Sodergren E.J."/>
            <person name="Scherer S."/>
            <person name="Scott G."/>
            <person name="Steffen D."/>
            <person name="Worley K.C."/>
            <person name="Burch P.E."/>
            <person name="Okwuonu G."/>
            <person name="Hines S."/>
            <person name="Lewis L."/>
            <person name="Deramo C."/>
            <person name="Delgado O."/>
            <person name="Dugan-Rocha S."/>
            <person name="Miner G."/>
            <person name="Morgan M."/>
            <person name="Hawes A."/>
            <person name="Gill R."/>
            <person name="Holt R.A."/>
            <person name="Adams M.D."/>
            <person name="Amanatides P.G."/>
            <person name="Baden-Tillson H."/>
            <person name="Barnstead M."/>
            <person name="Chin S."/>
            <person name="Evans C.A."/>
            <person name="Ferriera S."/>
            <person name="Fosler C."/>
            <person name="Glodek A."/>
            <person name="Gu Z."/>
            <person name="Jennings D."/>
            <person name="Kraft C.L."/>
            <person name="Nguyen T."/>
            <person name="Pfannkoch C.M."/>
            <person name="Sitter C."/>
            <person name="Sutton G.G."/>
            <person name="Venter J.C."/>
            <person name="Woodage T."/>
            <person name="Smith D."/>
            <person name="Lee H.-M."/>
            <person name="Gustafson E."/>
            <person name="Cahill P."/>
            <person name="Kana A."/>
            <person name="Doucette-Stamm L."/>
            <person name="Weinstock K."/>
            <person name="Fechtel K."/>
            <person name="Weiss R.B."/>
            <person name="Dunn D.M."/>
            <person name="Green E.D."/>
            <person name="Blakesley R.W."/>
            <person name="Bouffard G.G."/>
            <person name="De Jong P.J."/>
            <person name="Osoegawa K."/>
            <person name="Zhu B."/>
            <person name="Marra M."/>
            <person name="Schein J."/>
            <person name="Bosdet I."/>
            <person name="Fjell C."/>
            <person name="Jones S."/>
            <person name="Krzywinski M."/>
            <person name="Mathewson C."/>
            <person name="Siddiqui A."/>
            <person name="Wye N."/>
            <person name="McPherson J."/>
            <person name="Zhao S."/>
            <person name="Fraser C.M."/>
            <person name="Shetty J."/>
            <person name="Shatsman S."/>
            <person name="Geer K."/>
            <person name="Chen Y."/>
            <person name="Abramzon S."/>
            <person name="Nierman W.C."/>
            <person name="Havlak P.H."/>
            <person name="Chen R."/>
            <person name="Durbin K.J."/>
            <person name="Egan A."/>
            <person name="Ren Y."/>
            <person name="Song X.-Z."/>
            <person name="Li B."/>
            <person name="Liu Y."/>
            <person name="Qin X."/>
            <person name="Cawley S."/>
            <person name="Cooney A.J."/>
            <person name="D'Souza L.M."/>
            <person name="Martin K."/>
            <person name="Wu J.Q."/>
            <person name="Gonzalez-Garay M.L."/>
            <person name="Jackson A.R."/>
            <person name="Kalafus K.J."/>
            <person name="McLeod M.P."/>
            <person name="Milosavljevic A."/>
            <person name="Virk D."/>
            <person name="Volkov A."/>
            <person name="Wheeler D.A."/>
            <person name="Zhang Z."/>
            <person name="Bailey J.A."/>
            <person name="Eichler E.E."/>
            <person name="Tuzun E."/>
            <person name="Birney E."/>
            <person name="Mongin E."/>
            <person name="Ureta-Vidal A."/>
            <person name="Woodwark C."/>
            <person name="Zdobnov E."/>
            <person name="Bork P."/>
            <person name="Suyama M."/>
            <person name="Torrents D."/>
            <person name="Alexandersson M."/>
            <person name="Trask B.J."/>
            <person name="Young J.M."/>
            <person name="Huang H."/>
            <person name="Wang H."/>
            <person name="Xing H."/>
            <person name="Daniels S."/>
            <person name="Gietzen D."/>
            <person name="Schmidt J."/>
            <person name="Stevens K."/>
            <person name="Vitt U."/>
            <person name="Wingrove J."/>
            <person name="Camara F."/>
            <person name="Mar Alba M."/>
            <person name="Abril J.F."/>
            <person name="Guigo R."/>
            <person name="Smit A."/>
            <person name="Dubchak I."/>
            <person name="Rubin E.M."/>
            <person name="Couronne O."/>
            <person name="Poliakov A."/>
            <person name="Huebner N."/>
            <person name="Ganten D."/>
            <person name="Goesele C."/>
            <person name="Hummel O."/>
            <person name="Kreitler T."/>
            <person name="Lee Y.-A."/>
            <person name="Monti J."/>
            <person name="Schulz H."/>
            <person name="Zimdahl H."/>
            <person name="Himmelbauer H."/>
            <person name="Lehrach H."/>
            <person name="Jacob H.J."/>
            <person name="Bromberg S."/>
            <person name="Gullings-Handley J."/>
            <person name="Jensen-Seaman M.I."/>
            <person name="Kwitek A.E."/>
            <person name="Lazar J."/>
            <person name="Pasko D."/>
            <person name="Tonellato P.J."/>
            <person name="Twigger S."/>
            <person name="Ponting C.P."/>
            <person name="Duarte J.M."/>
            <person name="Rice S."/>
            <person name="Goodstadt L."/>
            <person name="Beatson S.A."/>
            <person name="Emes R.D."/>
            <person name="Winter E.E."/>
            <person name="Webber C."/>
            <person name="Brandt P."/>
            <person name="Nyakatura G."/>
            <person name="Adetobi M."/>
            <person name="Chiaromonte F."/>
            <person name="Elnitski L."/>
            <person name="Eswara P."/>
            <person name="Hardison R.C."/>
            <person name="Hou M."/>
            <person name="Kolbe D."/>
            <person name="Makova K."/>
            <person name="Miller W."/>
            <person name="Nekrutenko A."/>
            <person name="Riemer C."/>
            <person name="Schwartz S."/>
            <person name="Taylor J."/>
            <person name="Yang S."/>
            <person name="Zhang Y."/>
            <person name="Lindpaintner K."/>
            <person name="Andrews T.D."/>
            <person name="Caccamo M."/>
            <person name="Clamp M."/>
            <person name="Clarke L."/>
            <person name="Curwen V."/>
            <person name="Durbin R.M."/>
            <person name="Eyras E."/>
            <person name="Searle S.M."/>
            <person name="Cooper G.M."/>
            <person name="Batzoglou S."/>
            <person name="Brudno M."/>
            <person name="Sidow A."/>
            <person name="Stone E.A."/>
            <person name="Payseur B.A."/>
            <person name="Bourque G."/>
            <person name="Lopez-Otin C."/>
            <person name="Puente X.S."/>
            <person name="Chakrabarti K."/>
            <person name="Chatterji S."/>
            <person name="Dewey C."/>
            <person name="Pachter L."/>
            <person name="Bray N."/>
            <person name="Yap V.B."/>
            <person name="Caspi A."/>
            <person name="Tesler G."/>
            <person name="Pevzner P.A."/>
            <person name="Haussler D."/>
            <person name="Roskin K.M."/>
            <person name="Baertsch R."/>
            <person name="Clawson H."/>
            <person name="Furey T.S."/>
            <person name="Hinrichs A.S."/>
            <person name="Karolchik D."/>
            <person name="Kent W.J."/>
            <person name="Rosenbloom K.R."/>
            <person name="Trumbower H."/>
            <person name="Weirauch M."/>
            <person name="Cooper D.N."/>
            <person name="Stenson P.D."/>
            <person name="Ma B."/>
            <person name="Brent M."/>
            <person name="Arumugam M."/>
            <person name="Shteynberg D."/>
            <person name="Copley R.R."/>
            <person name="Taylor M.S."/>
            <person name="Riethman H."/>
            <person name="Mudunuri U."/>
            <person name="Peterson J."/>
            <person name="Guyer M."/>
            <person name="Felsenfeld A."/>
            <person name="Old S."/>
            <person name="Mockrin S."/>
            <person name="Collins F.S."/>
        </authorList>
    </citation>
    <scope>NUCLEOTIDE SEQUENCE [LARGE SCALE GENOMIC DNA]</scope>
    <source>
        <strain>Brown Norway</strain>
    </source>
</reference>
<evidence type="ECO:0000250" key="1"/>
<evidence type="ECO:0000250" key="2">
    <source>
        <dbReference type="UniProtKB" id="Q86XL3"/>
    </source>
</evidence>
<evidence type="ECO:0000255" key="3"/>
<evidence type="ECO:0000255" key="4">
    <source>
        <dbReference type="PROSITE-ProRule" id="PRU00313"/>
    </source>
</evidence>
<evidence type="ECO:0000256" key="5">
    <source>
        <dbReference type="SAM" id="MobiDB-lite"/>
    </source>
</evidence>
<evidence type="ECO:0000303" key="6">
    <source ref="1"/>
</evidence>
<evidence type="ECO:0000305" key="7"/>
<organism>
    <name type="scientific">Rattus norvegicus</name>
    <name type="common">Rat</name>
    <dbReference type="NCBI Taxonomy" id="10116"/>
    <lineage>
        <taxon>Eukaryota</taxon>
        <taxon>Metazoa</taxon>
        <taxon>Chordata</taxon>
        <taxon>Craniata</taxon>
        <taxon>Vertebrata</taxon>
        <taxon>Euteleostomi</taxon>
        <taxon>Mammalia</taxon>
        <taxon>Eutheria</taxon>
        <taxon>Euarchontoglires</taxon>
        <taxon>Glires</taxon>
        <taxon>Rodentia</taxon>
        <taxon>Myomorpha</taxon>
        <taxon>Muroidea</taxon>
        <taxon>Muridae</taxon>
        <taxon>Murinae</taxon>
        <taxon>Rattus</taxon>
    </lineage>
</organism>